<protein>
    <recommendedName>
        <fullName>Myotoxin-2</fullName>
    </recommendedName>
    <alternativeName>
        <fullName>Crotamine-2</fullName>
    </alternativeName>
</protein>
<reference key="1">
    <citation type="journal article" date="1990" name="Toxicon">
        <title>Cloning and nucleotide sequences of crotamine genes.</title>
        <authorList>
            <person name="Smith L.A."/>
            <person name="Schmidt J.J."/>
        </authorList>
    </citation>
    <scope>NUCLEOTIDE SEQUENCE [MRNA]</scope>
    <source>
        <tissue>Venom gland</tissue>
    </source>
</reference>
<comment type="function">
    <text evidence="2">Cationic peptide that possesses multiple functions. It acts as a cell-penetrating peptide (CPP), and as a potent voltage-gated potassium channel (Kv) inhibitor. It exhibits antimicrobial activities, hind limb paralysis, and severe muscle necrosis by a non-enzymatic mechanism.</text>
</comment>
<comment type="subunit">
    <text evidence="1">Monomer.</text>
</comment>
<comment type="subcellular location">
    <subcellularLocation>
        <location evidence="4">Secreted</location>
    </subcellularLocation>
</comment>
<comment type="tissue specificity">
    <text evidence="4">Expressed by the venom gland.</text>
</comment>
<comment type="similarity">
    <text evidence="3">Belongs to the crotamine-myotoxin family.</text>
</comment>
<name>MYX2_CRODU</name>
<accession>P24332</accession>
<proteinExistence type="evidence at transcript level"/>
<evidence type="ECO:0000250" key="1"/>
<evidence type="ECO:0000250" key="2">
    <source>
        <dbReference type="UniProtKB" id="Q9PWF3"/>
    </source>
</evidence>
<evidence type="ECO:0000305" key="3"/>
<evidence type="ECO:0000305" key="4">
    <source>
    </source>
</evidence>
<sequence>KILYLLFAFLFLAFLSEPGNAYKRCHIKGGHCFPKEKICIPPSSDFGKMDCPWRRKSLKKGSGK</sequence>
<feature type="signal peptide" evidence="2">
    <location>
        <begin position="1" status="less than"/>
        <end position="21"/>
    </location>
</feature>
<feature type="chain" id="PRO_0000035180" description="Myotoxin-2">
    <location>
        <begin position="22"/>
        <end position="63"/>
    </location>
</feature>
<feature type="disulfide bond" evidence="2">
    <location>
        <begin position="32"/>
        <end position="51"/>
    </location>
</feature>
<feature type="non-terminal residue">
    <location>
        <position position="1"/>
    </location>
</feature>
<dbReference type="PIR" id="B35947">
    <property type="entry name" value="B35947"/>
</dbReference>
<dbReference type="SMR" id="P24332"/>
<dbReference type="GO" id="GO:0005576">
    <property type="term" value="C:extracellular region"/>
    <property type="evidence" value="ECO:0007669"/>
    <property type="project" value="UniProtKB-SubCell"/>
</dbReference>
<dbReference type="GO" id="GO:0015459">
    <property type="term" value="F:potassium channel regulator activity"/>
    <property type="evidence" value="ECO:0007669"/>
    <property type="project" value="UniProtKB-KW"/>
</dbReference>
<dbReference type="GO" id="GO:0090729">
    <property type="term" value="F:toxin activity"/>
    <property type="evidence" value="ECO:0007669"/>
    <property type="project" value="UniProtKB-KW"/>
</dbReference>
<dbReference type="GO" id="GO:0044564">
    <property type="term" value="P:envenomation resulting in occlusion of the pore of voltage-gated potassium channel in another organism"/>
    <property type="evidence" value="ECO:0000250"/>
    <property type="project" value="UniProtKB"/>
</dbReference>
<dbReference type="FunFam" id="2.20.20.10:FF:000001">
    <property type="entry name" value="Crotamine"/>
    <property type="match status" value="1"/>
</dbReference>
<dbReference type="Gene3D" id="2.20.20.10">
    <property type="entry name" value="Anthopleurin-A"/>
    <property type="match status" value="1"/>
</dbReference>
<dbReference type="InterPro" id="IPR023355">
    <property type="entry name" value="Myo_ane_neurotoxin_sf"/>
</dbReference>
<dbReference type="InterPro" id="IPR000881">
    <property type="entry name" value="Myotoxin"/>
</dbReference>
<dbReference type="Pfam" id="PF00819">
    <property type="entry name" value="Myotoxins"/>
    <property type="match status" value="1"/>
</dbReference>
<dbReference type="PRINTS" id="PR00283">
    <property type="entry name" value="MYOTOXIN"/>
</dbReference>
<dbReference type="SUPFAM" id="SSF57392">
    <property type="entry name" value="Defensin-like"/>
    <property type="match status" value="1"/>
</dbReference>
<dbReference type="PROSITE" id="PS51345">
    <property type="entry name" value="MYOTOXINS_2"/>
    <property type="match status" value="1"/>
</dbReference>
<keyword id="KW-0929">Antimicrobial</keyword>
<keyword id="KW-1015">Disulfide bond</keyword>
<keyword id="KW-0872">Ion channel impairing toxin</keyword>
<keyword id="KW-0959">Myotoxin</keyword>
<keyword id="KW-0528">Neurotoxin</keyword>
<keyword id="KW-0632">Potassium channel impairing toxin</keyword>
<keyword id="KW-0964">Secreted</keyword>
<keyword id="KW-0732">Signal</keyword>
<keyword id="KW-0800">Toxin</keyword>
<keyword id="KW-1220">Voltage-gated potassium channel impairing toxin</keyword>
<organism>
    <name type="scientific">Crotalus durissus terrificus</name>
    <name type="common">South American rattlesnake</name>
    <dbReference type="NCBI Taxonomy" id="8732"/>
    <lineage>
        <taxon>Eukaryota</taxon>
        <taxon>Metazoa</taxon>
        <taxon>Chordata</taxon>
        <taxon>Craniata</taxon>
        <taxon>Vertebrata</taxon>
        <taxon>Euteleostomi</taxon>
        <taxon>Lepidosauria</taxon>
        <taxon>Squamata</taxon>
        <taxon>Bifurcata</taxon>
        <taxon>Unidentata</taxon>
        <taxon>Episquamata</taxon>
        <taxon>Toxicofera</taxon>
        <taxon>Serpentes</taxon>
        <taxon>Colubroidea</taxon>
        <taxon>Viperidae</taxon>
        <taxon>Crotalinae</taxon>
        <taxon>Crotalus</taxon>
    </lineage>
</organism>